<accession>Q1J5T2</accession>
<keyword id="KW-0131">Cell cycle</keyword>
<keyword id="KW-0132">Cell division</keyword>
<keyword id="KW-0963">Cytoplasm</keyword>
<keyword id="KW-0717">Septation</keyword>
<reference key="1">
    <citation type="journal article" date="2006" name="Proc. Natl. Acad. Sci. U.S.A.">
        <title>Molecular genetic anatomy of inter- and intraserotype variation in the human bacterial pathogen group A Streptococcus.</title>
        <authorList>
            <person name="Beres S.B."/>
            <person name="Richter E.W."/>
            <person name="Nagiec M.J."/>
            <person name="Sumby P."/>
            <person name="Porcella S.F."/>
            <person name="DeLeo F.R."/>
            <person name="Musser J.M."/>
        </authorList>
    </citation>
    <scope>NUCLEOTIDE SEQUENCE [LARGE SCALE GENOMIC DNA]</scope>
    <source>
        <strain>MGAS10750</strain>
    </source>
</reference>
<feature type="chain" id="PRO_0000334106" description="Cell division protein SepF">
    <location>
        <begin position="1"/>
        <end position="218"/>
    </location>
</feature>
<feature type="region of interest" description="Disordered" evidence="2">
    <location>
        <begin position="24"/>
        <end position="115"/>
    </location>
</feature>
<feature type="compositionally biased region" description="Polar residues" evidence="2">
    <location>
        <begin position="28"/>
        <end position="43"/>
    </location>
</feature>
<feature type="compositionally biased region" description="Basic and acidic residues" evidence="2">
    <location>
        <begin position="47"/>
        <end position="63"/>
    </location>
</feature>
<organism>
    <name type="scientific">Streptococcus pyogenes serotype M4 (strain MGAS10750)</name>
    <dbReference type="NCBI Taxonomy" id="370554"/>
    <lineage>
        <taxon>Bacteria</taxon>
        <taxon>Bacillati</taxon>
        <taxon>Bacillota</taxon>
        <taxon>Bacilli</taxon>
        <taxon>Lactobacillales</taxon>
        <taxon>Streptococcaceae</taxon>
        <taxon>Streptococcus</taxon>
    </lineage>
</organism>
<protein>
    <recommendedName>
        <fullName evidence="1">Cell division protein SepF</fullName>
    </recommendedName>
</protein>
<name>SEPF_STRPF</name>
<comment type="function">
    <text evidence="1">Cell division protein that is part of the divisome complex and is recruited early to the Z-ring. Probably stimulates Z-ring formation, perhaps through the cross-linking of FtsZ protofilaments. Its function overlaps with FtsA.</text>
</comment>
<comment type="subunit">
    <text evidence="1">Homodimer. Interacts with FtsZ.</text>
</comment>
<comment type="subcellular location">
    <subcellularLocation>
        <location evidence="1">Cytoplasm</location>
    </subcellularLocation>
    <text evidence="1">Localizes to the division site, in a FtsZ-dependent manner.</text>
</comment>
<comment type="similarity">
    <text evidence="1">Belongs to the SepF family.</text>
</comment>
<comment type="sequence caution" evidence="3">
    <conflict type="erroneous initiation">
        <sequence resource="EMBL-CDS" id="ABF38304"/>
    </conflict>
</comment>
<gene>
    <name evidence="1" type="primary">sepF</name>
    <name type="ordered locus">MGAS10750_Spy1354</name>
</gene>
<evidence type="ECO:0000255" key="1">
    <source>
        <dbReference type="HAMAP-Rule" id="MF_01197"/>
    </source>
</evidence>
<evidence type="ECO:0000256" key="2">
    <source>
        <dbReference type="SAM" id="MobiDB-lite"/>
    </source>
</evidence>
<evidence type="ECO:0000305" key="3"/>
<dbReference type="EMBL" id="CP000262">
    <property type="protein sequence ID" value="ABF38304.1"/>
    <property type="status" value="ALT_INIT"/>
    <property type="molecule type" value="Genomic_DNA"/>
</dbReference>
<dbReference type="SMR" id="Q1J5T2"/>
<dbReference type="KEGG" id="spi:MGAS10750_Spy1354"/>
<dbReference type="HOGENOM" id="CLU_078499_2_0_9"/>
<dbReference type="Proteomes" id="UP000002434">
    <property type="component" value="Chromosome"/>
</dbReference>
<dbReference type="GO" id="GO:0005737">
    <property type="term" value="C:cytoplasm"/>
    <property type="evidence" value="ECO:0007669"/>
    <property type="project" value="UniProtKB-SubCell"/>
</dbReference>
<dbReference type="GO" id="GO:0000917">
    <property type="term" value="P:division septum assembly"/>
    <property type="evidence" value="ECO:0007669"/>
    <property type="project" value="UniProtKB-KW"/>
</dbReference>
<dbReference type="GO" id="GO:0043093">
    <property type="term" value="P:FtsZ-dependent cytokinesis"/>
    <property type="evidence" value="ECO:0007669"/>
    <property type="project" value="UniProtKB-UniRule"/>
</dbReference>
<dbReference type="Gene3D" id="3.30.110.150">
    <property type="entry name" value="SepF-like protein"/>
    <property type="match status" value="1"/>
</dbReference>
<dbReference type="HAMAP" id="MF_01197">
    <property type="entry name" value="SepF"/>
    <property type="match status" value="1"/>
</dbReference>
<dbReference type="InterPro" id="IPR023052">
    <property type="entry name" value="Cell_div_SepF"/>
</dbReference>
<dbReference type="InterPro" id="IPR007561">
    <property type="entry name" value="Cell_div_SepF/SepF-rel"/>
</dbReference>
<dbReference type="InterPro" id="IPR038594">
    <property type="entry name" value="SepF-like_sf"/>
</dbReference>
<dbReference type="PANTHER" id="PTHR35798">
    <property type="entry name" value="CELL DIVISION PROTEIN SEPF"/>
    <property type="match status" value="1"/>
</dbReference>
<dbReference type="PANTHER" id="PTHR35798:SF1">
    <property type="entry name" value="CELL DIVISION PROTEIN SEPF"/>
    <property type="match status" value="1"/>
</dbReference>
<dbReference type="Pfam" id="PF04472">
    <property type="entry name" value="SepF"/>
    <property type="match status" value="1"/>
</dbReference>
<proteinExistence type="inferred from homology"/>
<sequence>MAFKDTFNKMISYFDTDEVNEVEEDVTASTDNVIPRSQQSVRASSHPKQEPRNNHVQQDHQARSQEQTRSQMHPKHGTSERYYQQSQPKEGHEMVDRRKRMSTSGIANRREQYQQSTCSDQTTIALKYPRKYEDAQEIVDLLIVNECVLIDFQFMLDAQARRCLDFIDGASKVLYGSLQKVGSSMYLLAPSNVSVNIEEMTIPHTTQDIGFDFDMKRR</sequence>